<feature type="chain" id="PRO_0000109886" description="Oxygen-dependent coproporphyrinogen-III oxidase">
    <location>
        <begin position="1"/>
        <end position="316"/>
    </location>
</feature>
<feature type="region of interest" description="Important for dimerization" evidence="1">
    <location>
        <begin position="281"/>
        <end position="316"/>
    </location>
</feature>
<feature type="active site" description="Proton donor" evidence="1">
    <location>
        <position position="147"/>
    </location>
</feature>
<feature type="binding site" evidence="1">
    <location>
        <position position="133"/>
    </location>
    <ligand>
        <name>substrate</name>
    </ligand>
</feature>
<feature type="binding site" evidence="1">
    <location>
        <position position="137"/>
    </location>
    <ligand>
        <name>a divalent metal cation</name>
        <dbReference type="ChEBI" id="CHEBI:60240"/>
    </ligand>
</feature>
<feature type="binding site" evidence="1">
    <location>
        <position position="147"/>
    </location>
    <ligand>
        <name>a divalent metal cation</name>
        <dbReference type="ChEBI" id="CHEBI:60240"/>
    </ligand>
</feature>
<feature type="binding site" evidence="1">
    <location>
        <begin position="149"/>
        <end position="151"/>
    </location>
    <ligand>
        <name>substrate</name>
    </ligand>
</feature>
<feature type="binding site" evidence="1">
    <location>
        <position position="185"/>
    </location>
    <ligand>
        <name>a divalent metal cation</name>
        <dbReference type="ChEBI" id="CHEBI:60240"/>
    </ligand>
</feature>
<feature type="binding site" evidence="1">
    <location>
        <position position="216"/>
    </location>
    <ligand>
        <name>a divalent metal cation</name>
        <dbReference type="ChEBI" id="CHEBI:60240"/>
    </ligand>
</feature>
<feature type="binding site" evidence="1">
    <location>
        <begin position="299"/>
        <end position="301"/>
    </location>
    <ligand>
        <name>substrate</name>
    </ligand>
</feature>
<feature type="site" description="Important for dimerization" evidence="1">
    <location>
        <position position="216"/>
    </location>
</feature>
<sequence>MVGTAQGRLCPPYGRSVRELNMDVSTIEDRKTRARAWFEALRDDICASFERLEDDAPQGLYPGEAGRFTRTPWQRTDHSGAAGGGGVMSMMSGRLFEKVGVHCSTVHGEFAPEFRAQIPGAADDPRFWASGISLIAHLRNPHVPAVHMNTRFVVTTKAWFGGGADLTPVLDRRRTQDDADSIAFHAAMKEACVQPNGVADYDKYKKWCDEYFYLPHRKEARGIGGIFYDWHDSGDWDADLAFTQDVGRAFLKIYPDIVRRNFASAWTAADREEQLIRRGRYVEFNLLYDRGTIFGLKTGGNVDSILSSLPPEVKWP</sequence>
<proteinExistence type="inferred from homology"/>
<dbReference type="EC" id="1.3.3.3" evidence="1"/>
<dbReference type="EMBL" id="BA000040">
    <property type="protein sequence ID" value="BAC47746.1"/>
    <property type="molecule type" value="Genomic_DNA"/>
</dbReference>
<dbReference type="RefSeq" id="NP_769121.1">
    <property type="nucleotide sequence ID" value="NC_004463.1"/>
</dbReference>
<dbReference type="SMR" id="Q89SC2"/>
<dbReference type="FunCoup" id="Q89SC2">
    <property type="interactions" value="603"/>
</dbReference>
<dbReference type="STRING" id="224911.AAV28_09330"/>
<dbReference type="EnsemblBacteria" id="BAC47746">
    <property type="protein sequence ID" value="BAC47746"/>
    <property type="gene ID" value="BAC47746"/>
</dbReference>
<dbReference type="KEGG" id="bja:bll2481"/>
<dbReference type="PATRIC" id="fig|224911.5.peg.2434"/>
<dbReference type="eggNOG" id="COG0408">
    <property type="taxonomic scope" value="Bacteria"/>
</dbReference>
<dbReference type="HOGENOM" id="CLU_026169_0_1_5"/>
<dbReference type="InParanoid" id="Q89SC2"/>
<dbReference type="OrthoDB" id="9777553at2"/>
<dbReference type="PhylomeDB" id="Q89SC2"/>
<dbReference type="UniPathway" id="UPA00251">
    <property type="reaction ID" value="UER00322"/>
</dbReference>
<dbReference type="Proteomes" id="UP000002526">
    <property type="component" value="Chromosome"/>
</dbReference>
<dbReference type="GO" id="GO:0005737">
    <property type="term" value="C:cytoplasm"/>
    <property type="evidence" value="ECO:0000318"/>
    <property type="project" value="GO_Central"/>
</dbReference>
<dbReference type="GO" id="GO:0004109">
    <property type="term" value="F:coproporphyrinogen oxidase activity"/>
    <property type="evidence" value="ECO:0000318"/>
    <property type="project" value="GO_Central"/>
</dbReference>
<dbReference type="GO" id="GO:0046872">
    <property type="term" value="F:metal ion binding"/>
    <property type="evidence" value="ECO:0007669"/>
    <property type="project" value="UniProtKB-KW"/>
</dbReference>
<dbReference type="GO" id="GO:0042803">
    <property type="term" value="F:protein homodimerization activity"/>
    <property type="evidence" value="ECO:0000250"/>
    <property type="project" value="UniProtKB"/>
</dbReference>
<dbReference type="GO" id="GO:0006782">
    <property type="term" value="P:protoporphyrinogen IX biosynthetic process"/>
    <property type="evidence" value="ECO:0000318"/>
    <property type="project" value="GO_Central"/>
</dbReference>
<dbReference type="FunFam" id="3.40.1500.10:FF:000005">
    <property type="entry name" value="Oxygen-dependent coproporphyrinogen-III oxidase"/>
    <property type="match status" value="1"/>
</dbReference>
<dbReference type="Gene3D" id="3.40.1500.10">
    <property type="entry name" value="Coproporphyrinogen III oxidase, aerobic"/>
    <property type="match status" value="1"/>
</dbReference>
<dbReference type="HAMAP" id="MF_00333">
    <property type="entry name" value="Coprogen_oxidas"/>
    <property type="match status" value="1"/>
</dbReference>
<dbReference type="InterPro" id="IPR001260">
    <property type="entry name" value="Coprogen_oxidase_aer"/>
</dbReference>
<dbReference type="InterPro" id="IPR036406">
    <property type="entry name" value="Coprogen_oxidase_aer_sf"/>
</dbReference>
<dbReference type="InterPro" id="IPR018375">
    <property type="entry name" value="Coprogen_oxidase_CS"/>
</dbReference>
<dbReference type="NCBIfam" id="NF003727">
    <property type="entry name" value="PRK05330.1"/>
    <property type="match status" value="1"/>
</dbReference>
<dbReference type="PANTHER" id="PTHR10755">
    <property type="entry name" value="COPROPORPHYRINOGEN III OXIDASE, MITOCHONDRIAL"/>
    <property type="match status" value="1"/>
</dbReference>
<dbReference type="PANTHER" id="PTHR10755:SF0">
    <property type="entry name" value="OXYGEN-DEPENDENT COPROPORPHYRINOGEN-III OXIDASE, MITOCHONDRIAL"/>
    <property type="match status" value="1"/>
</dbReference>
<dbReference type="Pfam" id="PF01218">
    <property type="entry name" value="Coprogen_oxidas"/>
    <property type="match status" value="1"/>
</dbReference>
<dbReference type="PIRSF" id="PIRSF000166">
    <property type="entry name" value="Coproporphyri_ox"/>
    <property type="match status" value="1"/>
</dbReference>
<dbReference type="PRINTS" id="PR00073">
    <property type="entry name" value="COPRGNOXDASE"/>
</dbReference>
<dbReference type="SUPFAM" id="SSF102886">
    <property type="entry name" value="Coproporphyrinogen III oxidase"/>
    <property type="match status" value="1"/>
</dbReference>
<dbReference type="PROSITE" id="PS01021">
    <property type="entry name" value="COPROGEN_OXIDASE"/>
    <property type="match status" value="1"/>
</dbReference>
<reference key="1">
    <citation type="journal article" date="2002" name="DNA Res.">
        <title>Complete genomic sequence of nitrogen-fixing symbiotic bacterium Bradyrhizobium japonicum USDA110.</title>
        <authorList>
            <person name="Kaneko T."/>
            <person name="Nakamura Y."/>
            <person name="Sato S."/>
            <person name="Minamisawa K."/>
            <person name="Uchiumi T."/>
            <person name="Sasamoto S."/>
            <person name="Watanabe A."/>
            <person name="Idesawa K."/>
            <person name="Iriguchi M."/>
            <person name="Kawashima K."/>
            <person name="Kohara M."/>
            <person name="Matsumoto M."/>
            <person name="Shimpo S."/>
            <person name="Tsuruoka H."/>
            <person name="Wada T."/>
            <person name="Yamada M."/>
            <person name="Tabata S."/>
        </authorList>
    </citation>
    <scope>NUCLEOTIDE SEQUENCE [LARGE SCALE GENOMIC DNA]</scope>
    <source>
        <strain>JCM 10833 / BCRC 13528 / IAM 13628 / NBRC 14792 / USDA 110</strain>
    </source>
</reference>
<comment type="function">
    <text evidence="1">Involved in the heme biosynthesis. Catalyzes the aerobic oxidative decarboxylation of propionate groups of rings A and B of coproporphyrinogen-III to yield the vinyl groups in protoporphyrinogen-IX.</text>
</comment>
<comment type="catalytic activity">
    <reaction evidence="1">
        <text>coproporphyrinogen III + O2 + 2 H(+) = protoporphyrinogen IX + 2 CO2 + 2 H2O</text>
        <dbReference type="Rhea" id="RHEA:18257"/>
        <dbReference type="ChEBI" id="CHEBI:15377"/>
        <dbReference type="ChEBI" id="CHEBI:15378"/>
        <dbReference type="ChEBI" id="CHEBI:15379"/>
        <dbReference type="ChEBI" id="CHEBI:16526"/>
        <dbReference type="ChEBI" id="CHEBI:57307"/>
        <dbReference type="ChEBI" id="CHEBI:57309"/>
        <dbReference type="EC" id="1.3.3.3"/>
    </reaction>
</comment>
<comment type="cofactor">
    <cofactor evidence="1">
        <name>a divalent metal cation</name>
        <dbReference type="ChEBI" id="CHEBI:60240"/>
    </cofactor>
</comment>
<comment type="pathway">
    <text evidence="1">Porphyrin-containing compound metabolism; protoporphyrin-IX biosynthesis; protoporphyrinogen-IX from coproporphyrinogen-III (O2 route): step 1/1.</text>
</comment>
<comment type="subunit">
    <text evidence="1">Homodimer.</text>
</comment>
<comment type="subcellular location">
    <subcellularLocation>
        <location evidence="1">Cytoplasm</location>
    </subcellularLocation>
</comment>
<comment type="similarity">
    <text evidence="1">Belongs to the aerobic coproporphyrinogen-III oxidase family.</text>
</comment>
<organism>
    <name type="scientific">Bradyrhizobium diazoefficiens (strain JCM 10833 / BCRC 13528 / IAM 13628 / NBRC 14792 / USDA 110)</name>
    <dbReference type="NCBI Taxonomy" id="224911"/>
    <lineage>
        <taxon>Bacteria</taxon>
        <taxon>Pseudomonadati</taxon>
        <taxon>Pseudomonadota</taxon>
        <taxon>Alphaproteobacteria</taxon>
        <taxon>Hyphomicrobiales</taxon>
        <taxon>Nitrobacteraceae</taxon>
        <taxon>Bradyrhizobium</taxon>
    </lineage>
</organism>
<protein>
    <recommendedName>
        <fullName evidence="1">Oxygen-dependent coproporphyrinogen-III oxidase</fullName>
        <shortName evidence="1">CPO</shortName>
        <shortName evidence="1">Coprogen oxidase</shortName>
        <shortName evidence="1">Coproporphyrinogenase</shortName>
        <ecNumber evidence="1">1.3.3.3</ecNumber>
    </recommendedName>
</protein>
<accession>Q89SC2</accession>
<name>HEM6_BRADU</name>
<gene>
    <name evidence="1" type="primary">hemF</name>
    <name type="ordered locus">bll2481</name>
</gene>
<evidence type="ECO:0000255" key="1">
    <source>
        <dbReference type="HAMAP-Rule" id="MF_00333"/>
    </source>
</evidence>
<keyword id="KW-0963">Cytoplasm</keyword>
<keyword id="KW-0350">Heme biosynthesis</keyword>
<keyword id="KW-0479">Metal-binding</keyword>
<keyword id="KW-0560">Oxidoreductase</keyword>
<keyword id="KW-0627">Porphyrin biosynthesis</keyword>
<keyword id="KW-1185">Reference proteome</keyword>